<comment type="function">
    <text evidence="1 8 10 11">Guanine nucleotide exchange factor (GEF) which specifically activates small GTPase CDC42 by exchanging bound GDP for free GTP (PubMed:22461490, PubMed:28028151). During immune responses, required for interstitial dendritic cell (DC) migration by locally activating CDC42 at the leading edge membrane of DC (By similarity). Required for CD4(+) T-cell migration in response to chemokine stimulation by promoting CDC42 activation at T cell leading edge membrane (PubMed:28028151). Is involved in NK cell cytotoxicity by controlling polarization of microtubule-organizing center (MTOC), and possibly regulating CCDC88B-mediated lytic granule transport to MTOC during cell killing (PubMed:25762780).</text>
</comment>
<comment type="subunit">
    <text evidence="8 10 11">Interacts (via DOCKER domain) with GTPase CDC42; the interaction activates CDC42 by exchanging GDP for GTP (PubMed:22461490, PubMed:28028151). The unphosphorylated form interacts (via DOCKER domain) with LRCH1 (via LRR repeats); the interaction prevents the association between DOCK8 and CDC42 (PubMed:28028151). Interacts with CCDC88B (PubMed:25762780).</text>
</comment>
<comment type="interaction">
    <interactant intactId="EBI-2548605">
        <id>Q8NF50</id>
    </interactant>
    <interactant intactId="EBI-718719">
        <id>Q9Y2V2</id>
        <label>CARHSP1</label>
    </interactant>
    <organismsDiffer>false</organismsDiffer>
    <experiments>3</experiments>
</comment>
<comment type="interaction">
    <interactant intactId="EBI-2548605">
        <id>Q8NF50</id>
    </interactant>
    <interactant intactId="EBI-10171697">
        <id>Q6A162</id>
        <label>KRT40</label>
    </interactant>
    <organismsDiffer>false</organismsDiffer>
    <experiments>3</experiments>
</comment>
<comment type="interaction">
    <interactant intactId="EBI-2548605">
        <id>Q8NF50</id>
    </interactant>
    <interactant intactId="EBI-2797324">
        <id>Q9Y2L9</id>
        <label>LRCH1</label>
    </interactant>
    <organismsDiffer>false</organismsDiffer>
    <experiments>5</experiments>
</comment>
<comment type="interaction">
    <interactant intactId="EBI-2548605">
        <id>Q8NF50</id>
    </interactant>
    <interactant intactId="EBI-2659666">
        <id>Q5VUJ6</id>
        <label>LRCH2</label>
    </interactant>
    <organismsDiffer>false</organismsDiffer>
    <experiments>5</experiments>
</comment>
<comment type="interaction">
    <interactant intactId="EBI-2548605">
        <id>Q8NF50</id>
    </interactant>
    <interactant intactId="EBI-748397">
        <id>P50222</id>
        <label>MEOX2</label>
    </interactant>
    <organismsDiffer>false</organismsDiffer>
    <experiments>3</experiments>
</comment>
<comment type="interaction">
    <interactant intactId="EBI-2548605">
        <id>Q8NF50</id>
    </interactant>
    <interactant intactId="EBI-447677">
        <id>Q99836</id>
        <label>MYD88</label>
    </interactant>
    <organismsDiffer>false</organismsDiffer>
    <experiments>3</experiments>
</comment>
<comment type="interaction">
    <interactant intactId="EBI-2548605">
        <id>Q8NF50</id>
    </interactant>
    <interactant intactId="EBI-2568609">
        <id>Q9BSJ6</id>
        <label>PIMREG</label>
    </interactant>
    <organismsDiffer>false</organismsDiffer>
    <experiments>3</experiments>
</comment>
<comment type="interaction">
    <interactant intactId="EBI-10174653">
        <id>Q8NF50-2</id>
    </interactant>
    <interactant intactId="EBI-358049">
        <id>Q13895</id>
        <label>BYSL</label>
    </interactant>
    <organismsDiffer>false</organismsDiffer>
    <experiments>5</experiments>
</comment>
<comment type="interaction">
    <interactant intactId="EBI-10174653">
        <id>Q8NF50-2</id>
    </interactant>
    <interactant intactId="EBI-718719">
        <id>Q9Y2V2</id>
        <label>CARHSP1</label>
    </interactant>
    <organismsDiffer>false</organismsDiffer>
    <experiments>3</experiments>
</comment>
<comment type="interaction">
    <interactant intactId="EBI-10174653">
        <id>Q8NF50-2</id>
    </interactant>
    <interactant intactId="EBI-2692789">
        <id>O43633</id>
        <label>CHMP2A</label>
    </interactant>
    <organismsDiffer>false</organismsDiffer>
    <experiments>3</experiments>
</comment>
<comment type="interaction">
    <interactant intactId="EBI-10174653">
        <id>Q8NF50-2</id>
    </interactant>
    <interactant intactId="EBI-371876">
        <id>Q9NQT4</id>
        <label>EXOSC5</label>
    </interactant>
    <organismsDiffer>false</organismsDiffer>
    <experiments>3</experiments>
</comment>
<comment type="interaction">
    <interactant intactId="EBI-10174653">
        <id>Q8NF50-2</id>
    </interactant>
    <interactant intactId="EBI-744506">
        <id>Q86V42</id>
        <label>FAM124A</label>
    </interactant>
    <organismsDiffer>false</organismsDiffer>
    <experiments>3</experiments>
</comment>
<comment type="interaction">
    <interactant intactId="EBI-10174653">
        <id>Q8NF50-2</id>
    </interactant>
    <interactant intactId="EBI-719941">
        <id>Q3B820</id>
        <label>FAM161A</label>
    </interactant>
    <organismsDiffer>false</organismsDiffer>
    <experiments>3</experiments>
</comment>
<comment type="interaction">
    <interactant intactId="EBI-10174653">
        <id>Q8NF50-2</id>
    </interactant>
    <interactant intactId="EBI-2339898">
        <id>Q9NW38</id>
        <label>FANCL</label>
    </interactant>
    <organismsDiffer>false</organismsDiffer>
    <experiments>3</experiments>
</comment>
<comment type="interaction">
    <interactant intactId="EBI-10174653">
        <id>Q8NF50-2</id>
    </interactant>
    <interactant intactId="EBI-719790">
        <id>Q9NXK8</id>
        <label>FBXL12</label>
    </interactant>
    <organismsDiffer>false</organismsDiffer>
    <experiments>3</experiments>
</comment>
<comment type="interaction">
    <interactant intactId="EBI-10174653">
        <id>Q8NF50-2</id>
    </interactant>
    <interactant intactId="EBI-719843">
        <id>P02008</id>
        <label>HBZ</label>
    </interactant>
    <organismsDiffer>false</organismsDiffer>
    <experiments>3</experiments>
</comment>
<comment type="interaction">
    <interactant intactId="EBI-10174653">
        <id>Q8NF50-2</id>
    </interactant>
    <interactant intactId="EBI-2797324">
        <id>Q9Y2L9</id>
        <label>LRCH1</label>
    </interactant>
    <organismsDiffer>false</organismsDiffer>
    <experiments>5</experiments>
</comment>
<comment type="interaction">
    <interactant intactId="EBI-10174653">
        <id>Q8NF50-2</id>
    </interactant>
    <interactant intactId="EBI-8795942">
        <id>Q96II8</id>
        <label>LRCH3</label>
    </interactant>
    <organismsDiffer>false</organismsDiffer>
    <experiments>3</experiments>
</comment>
<comment type="interaction">
    <interactant intactId="EBI-10174653">
        <id>Q8NF50-2</id>
    </interactant>
    <interactant intactId="EBI-394659">
        <id>Q96HR3</id>
        <label>MED30</label>
    </interactant>
    <organismsDiffer>false</organismsDiffer>
    <experiments>3</experiments>
</comment>
<comment type="interaction">
    <interactant intactId="EBI-10174653">
        <id>Q8NF50-2</id>
    </interactant>
    <interactant intactId="EBI-7825143">
        <id>B2R894</id>
        <label>MRPL38</label>
    </interactant>
    <organismsDiffer>false</organismsDiffer>
    <experiments>3</experiments>
</comment>
<comment type="interaction">
    <interactant intactId="EBI-10174653">
        <id>Q8NF50-2</id>
    </interactant>
    <interactant intactId="EBI-10217913">
        <id>Q14D33</id>
        <label>RTP5</label>
    </interactant>
    <organismsDiffer>false</organismsDiffer>
    <experiments>3</experiments>
</comment>
<comment type="interaction">
    <interactant intactId="EBI-10174653">
        <id>Q8NF50-2</id>
    </interactant>
    <interactant intactId="EBI-6448783">
        <id>G3V1X1</id>
        <label>ZFC3H1</label>
    </interactant>
    <organismsDiffer>false</organismsDiffer>
    <experiments>3</experiments>
</comment>
<comment type="interaction">
    <interactant intactId="EBI-10174653">
        <id>Q8NF50-2</id>
    </interactant>
    <interactant intactId="EBI-745520">
        <id>Q9P0T4</id>
        <label>ZNF581</label>
    </interactant>
    <organismsDiffer>false</organismsDiffer>
    <experiments>3</experiments>
</comment>
<comment type="interaction">
    <interactant intactId="EBI-10174653">
        <id>Q8NF50-2</id>
    </interactant>
    <interactant intactId="EBI-10174650">
        <id>A8K900</id>
    </interactant>
    <organismsDiffer>false</organismsDiffer>
    <experiments>3</experiments>
</comment>
<comment type="interaction">
    <interactant intactId="EBI-25409271">
        <id>Q8NF50-3</id>
    </interactant>
    <interactant intactId="EBI-718707">
        <id>O75427</id>
        <label>LRCH4</label>
    </interactant>
    <organismsDiffer>false</organismsDiffer>
    <experiments>2</experiments>
</comment>
<comment type="interaction">
    <interactant intactId="EBI-12021848">
        <id>Q8NF50-4</id>
    </interactant>
    <interactant intactId="EBI-3866319">
        <id>Q9Y2V7</id>
        <label>COG6</label>
    </interactant>
    <organismsDiffer>false</organismsDiffer>
    <experiments>3</experiments>
</comment>
<comment type="interaction">
    <interactant intactId="EBI-12021848">
        <id>Q8NF50-4</id>
    </interactant>
    <interactant intactId="EBI-7116203">
        <id>O75031</id>
        <label>HSF2BP</label>
    </interactant>
    <organismsDiffer>false</organismsDiffer>
    <experiments>3</experiments>
</comment>
<comment type="interaction">
    <interactant intactId="EBI-12021848">
        <id>Q8NF50-4</id>
    </interactant>
    <interactant intactId="EBI-16439278">
        <id>Q6FHY5</id>
        <label>MEOX2</label>
    </interactant>
    <organismsDiffer>false</organismsDiffer>
    <experiments>3</experiments>
</comment>
<comment type="subcellular location">
    <subcellularLocation>
        <location evidence="11">Cytoplasm</location>
    </subcellularLocation>
    <subcellularLocation>
        <location evidence="11">Cell membrane</location>
        <topology evidence="15">Peripheral membrane protein</topology>
        <orientation evidence="14">Cytoplasmic side</orientation>
    </subcellularLocation>
    <subcellularLocation>
        <location evidence="11">Cell projection</location>
        <location evidence="11">Lamellipodium membrane</location>
        <topology evidence="15">Peripheral membrane protein</topology>
        <orientation evidence="14">Cytoplasmic side</orientation>
    </subcellularLocation>
    <text evidence="11">Enriched and co-localizes with GTPase CDC42 at the immunological synapse formed during T cell/antigen presenting cell cognate interaction. Translocates from the cytoplasm to the plasma membrane in response to chemokine CXCL12/SDF-1-alpha stimulation.</text>
</comment>
<comment type="alternative products">
    <event type="alternative splicing"/>
    <isoform>
        <id>Q8NF50-1</id>
        <name>1</name>
        <sequence type="displayed"/>
    </isoform>
    <isoform>
        <id>Q8NF50-2</id>
        <name>2</name>
        <sequence type="described" ref="VSP_027373"/>
    </isoform>
    <isoform>
        <id>Q8NF50-3</id>
        <name>3</name>
        <sequence type="described" ref="VSP_039838"/>
    </isoform>
    <isoform>
        <id>Q8NF50-4</id>
        <name>4</name>
        <sequence type="described" ref="VSP_039838 VSP_027373"/>
    </isoform>
</comment>
<comment type="tissue specificity">
    <text evidence="11">Expressed in peripheral blood mononuclear cells (PBMCs).</text>
</comment>
<comment type="domain">
    <text evidence="8 11">The DOCKER domain is necessary and sufficient for the GEF activity.</text>
</comment>
<comment type="PTM">
    <text evidence="11">In response to chemokine CXCL12/SDF-1-alpha stimulation, phosphorylated by PRKCA/PKC-alpha which promotes DOCK8 dissociation from LRCH1.</text>
</comment>
<comment type="disease" evidence="7">
    <disease id="DI-02809">
        <name>Hyper-IgE syndrome 2, autosomal recessive, with recurrent infections</name>
        <acronym>HIES2</acronym>
        <description>A rare disorder characterized by immunodeficiency, recurrent infections, eczema, increased serum IgE, eosinophilia and lack of connective tissue and skeletal involvement.</description>
        <dbReference type="MIM" id="243700"/>
    </disease>
    <text>The disease is caused by variants affecting the gene represented in this entry.</text>
</comment>
<comment type="disease" evidence="6">
    <disease id="DI-03185">
        <name>Intellectual developmental disorder, autosomal dominant 2</name>
        <acronym>MRD2</acronym>
        <description>A disorder characterized by significantly below average general intellectual functioning associated with impairments in adaptive behavior and manifested during the developmental period.</description>
        <dbReference type="MIM" id="614113"/>
    </disease>
    <text>The gene represented in this entry is involved in disease pathogenesis. A chromosomal aberration disrupting DOCK8 has been found in a patient with intellectual disability and ectodermal dysplasia. A balanced translocation, t(X;9) (q13.1;p24). A genomic deletion of approximately 230 kb in subtelomeric 9p has been detected in a patient with intellectual disability.</text>
</comment>
<comment type="similarity">
    <text evidence="2">Belongs to the DOCK family.</text>
</comment>
<comment type="sequence caution" evidence="14">
    <conflict type="frameshift">
        <sequence resource="EMBL-CDS" id="AAG42221"/>
    </conflict>
</comment>
<comment type="sequence caution" evidence="14">
    <conflict type="frameshift">
        <sequence resource="EMBL-CDS" id="BAB84907"/>
    </conflict>
</comment>
<comment type="sequence caution" evidence="14">
    <conflict type="erroneous initiation">
        <sequence resource="EMBL-CDS" id="CAI46160"/>
    </conflict>
</comment>
<dbReference type="EMBL" id="AB191037">
    <property type="protein sequence ID" value="BAE45254.1"/>
    <property type="molecule type" value="mRNA"/>
</dbReference>
<dbReference type="EMBL" id="AL158832">
    <property type="status" value="NOT_ANNOTATED_CDS"/>
    <property type="molecule type" value="Genomic_DNA"/>
</dbReference>
<dbReference type="EMBL" id="AL161725">
    <property type="status" value="NOT_ANNOTATED_CDS"/>
    <property type="molecule type" value="Genomic_DNA"/>
</dbReference>
<dbReference type="EMBL" id="BC019102">
    <property type="protein sequence ID" value="AAH19102.2"/>
    <property type="molecule type" value="mRNA"/>
</dbReference>
<dbReference type="EMBL" id="BC112894">
    <property type="protein sequence ID" value="AAI12895.1"/>
    <property type="molecule type" value="mRNA"/>
</dbReference>
<dbReference type="EMBL" id="BC130518">
    <property type="protein sequence ID" value="AAI30519.1"/>
    <property type="molecule type" value="mRNA"/>
</dbReference>
<dbReference type="EMBL" id="BC143929">
    <property type="protein sequence ID" value="AAI43930.1"/>
    <property type="molecule type" value="mRNA"/>
</dbReference>
<dbReference type="EMBL" id="AL583913">
    <property type="protein sequence ID" value="CAC29497.1"/>
    <property type="molecule type" value="mRNA"/>
</dbReference>
<dbReference type="EMBL" id="AL832270">
    <property type="protein sequence ID" value="CAI46160.1"/>
    <property type="status" value="ALT_INIT"/>
    <property type="molecule type" value="mRNA"/>
</dbReference>
<dbReference type="EMBL" id="AK090429">
    <property type="protein sequence ID" value="BAC03410.1"/>
    <property type="molecule type" value="mRNA"/>
</dbReference>
<dbReference type="EMBL" id="AK074081">
    <property type="protein sequence ID" value="BAB84907.1"/>
    <property type="status" value="ALT_FRAME"/>
    <property type="molecule type" value="mRNA"/>
</dbReference>
<dbReference type="EMBL" id="AK024436">
    <property type="protein sequence ID" value="BAB15726.1"/>
    <property type="molecule type" value="mRNA"/>
</dbReference>
<dbReference type="EMBL" id="AF194407">
    <property type="protein sequence ID" value="AAG42221.1"/>
    <property type="status" value="ALT_FRAME"/>
    <property type="molecule type" value="mRNA"/>
</dbReference>
<dbReference type="CCDS" id="CCDS55283.1">
    <molecule id="Q8NF50-3"/>
</dbReference>
<dbReference type="CCDS" id="CCDS55284.1">
    <molecule id="Q8NF50-4"/>
</dbReference>
<dbReference type="CCDS" id="CCDS6440.2">
    <molecule id="Q8NF50-1"/>
</dbReference>
<dbReference type="RefSeq" id="NP_001177387.1">
    <molecule id="Q8NF50-4"/>
    <property type="nucleotide sequence ID" value="NM_001190458.2"/>
</dbReference>
<dbReference type="RefSeq" id="NP_001180465.1">
    <molecule id="Q8NF50-3"/>
    <property type="nucleotide sequence ID" value="NM_001193536.2"/>
</dbReference>
<dbReference type="RefSeq" id="NP_982272.2">
    <molecule id="Q8NF50-1"/>
    <property type="nucleotide sequence ID" value="NM_203447.4"/>
</dbReference>
<dbReference type="RefSeq" id="XP_011516347.1">
    <molecule id="Q8NF50-4"/>
    <property type="nucleotide sequence ID" value="XM_011518045.4"/>
</dbReference>
<dbReference type="RefSeq" id="XP_011516349.1">
    <property type="nucleotide sequence ID" value="XM_011518047.2"/>
</dbReference>
<dbReference type="RefSeq" id="XP_011516350.1">
    <property type="nucleotide sequence ID" value="XM_011518048.2"/>
</dbReference>
<dbReference type="RefSeq" id="XP_016870662.1">
    <molecule id="Q8NF50-3"/>
    <property type="nucleotide sequence ID" value="XM_017015173.2"/>
</dbReference>
<dbReference type="RefSeq" id="XP_047279885.1">
    <molecule id="Q8NF50-3"/>
    <property type="nucleotide sequence ID" value="XM_047423929.1"/>
</dbReference>
<dbReference type="RefSeq" id="XP_047279889.1">
    <molecule id="Q8NF50-3"/>
    <property type="nucleotide sequence ID" value="XM_047423933.1"/>
</dbReference>
<dbReference type="SMR" id="Q8NF50"/>
<dbReference type="BioGRID" id="123577">
    <property type="interactions" value="127"/>
</dbReference>
<dbReference type="CORUM" id="Q8NF50"/>
<dbReference type="FunCoup" id="Q8NF50">
    <property type="interactions" value="3060"/>
</dbReference>
<dbReference type="IntAct" id="Q8NF50">
    <property type="interactions" value="112"/>
</dbReference>
<dbReference type="MINT" id="Q8NF50"/>
<dbReference type="STRING" id="9606.ENSP00000394888"/>
<dbReference type="GlyCosmos" id="Q8NF50">
    <property type="glycosylation" value="2 sites, 1 glycan"/>
</dbReference>
<dbReference type="GlyGen" id="Q8NF50">
    <property type="glycosylation" value="2 sites, 1 O-linked glycan (2 sites)"/>
</dbReference>
<dbReference type="iPTMnet" id="Q8NF50"/>
<dbReference type="PhosphoSitePlus" id="Q8NF50"/>
<dbReference type="BioMuta" id="DOCK8"/>
<dbReference type="DMDM" id="158937439"/>
<dbReference type="jPOST" id="Q8NF50"/>
<dbReference type="MassIVE" id="Q8NF50"/>
<dbReference type="PaxDb" id="9606-ENSP00000394888"/>
<dbReference type="PeptideAtlas" id="Q8NF50"/>
<dbReference type="ProteomicsDB" id="20435"/>
<dbReference type="ProteomicsDB" id="73260">
    <molecule id="Q8NF50-1"/>
</dbReference>
<dbReference type="ProteomicsDB" id="73261">
    <molecule id="Q8NF50-2"/>
</dbReference>
<dbReference type="ProteomicsDB" id="73262">
    <molecule id="Q8NF50-3"/>
</dbReference>
<dbReference type="Pumba" id="Q8NF50"/>
<dbReference type="Antibodypedia" id="758">
    <property type="antibodies" value="314 antibodies from 26 providers"/>
</dbReference>
<dbReference type="DNASU" id="81704"/>
<dbReference type="Ensembl" id="ENST00000432829.7">
    <molecule id="Q8NF50-1"/>
    <property type="protein sequence ID" value="ENSP00000394888.3"/>
    <property type="gene ID" value="ENSG00000107099.18"/>
</dbReference>
<dbReference type="Ensembl" id="ENST00000453981.5">
    <molecule id="Q8NF50-3"/>
    <property type="protein sequence ID" value="ENSP00000408464.2"/>
    <property type="gene ID" value="ENSG00000107099.18"/>
</dbReference>
<dbReference type="Ensembl" id="ENST00000469391.5">
    <molecule id="Q8NF50-4"/>
    <property type="protein sequence ID" value="ENSP00000419438.1"/>
    <property type="gene ID" value="ENSG00000107099.18"/>
</dbReference>
<dbReference type="GeneID" id="81704"/>
<dbReference type="KEGG" id="hsa:81704"/>
<dbReference type="MANE-Select" id="ENST00000432829.7">
    <property type="protein sequence ID" value="ENSP00000394888.3"/>
    <property type="RefSeq nucleotide sequence ID" value="NM_203447.4"/>
    <property type="RefSeq protein sequence ID" value="NP_982272.2"/>
</dbReference>
<dbReference type="UCSC" id="uc003zgf.2">
    <molecule id="Q8NF50-1"/>
    <property type="organism name" value="human"/>
</dbReference>
<dbReference type="AGR" id="HGNC:19191"/>
<dbReference type="CTD" id="81704"/>
<dbReference type="DisGeNET" id="81704"/>
<dbReference type="GeneCards" id="DOCK8"/>
<dbReference type="HGNC" id="HGNC:19191">
    <property type="gene designation" value="DOCK8"/>
</dbReference>
<dbReference type="HPA" id="ENSG00000107099">
    <property type="expression patterns" value="Tissue enhanced (bone marrow, lymphoid tissue)"/>
</dbReference>
<dbReference type="MalaCards" id="DOCK8"/>
<dbReference type="MIM" id="243700">
    <property type="type" value="phenotype"/>
</dbReference>
<dbReference type="MIM" id="611432">
    <property type="type" value="gene"/>
</dbReference>
<dbReference type="MIM" id="614113">
    <property type="type" value="phenotype"/>
</dbReference>
<dbReference type="neXtProt" id="NX_Q8NF50"/>
<dbReference type="OpenTargets" id="ENSG00000107099"/>
<dbReference type="Orphanet" id="178469">
    <property type="disease" value="Autosomal dominant non-syndromic intellectual disability"/>
</dbReference>
<dbReference type="Orphanet" id="217390">
    <property type="disease" value="Combined immunodeficiency due to DOCK8 deficiency"/>
</dbReference>
<dbReference type="PharmGKB" id="PA134918866"/>
<dbReference type="VEuPathDB" id="HostDB:ENSG00000107099"/>
<dbReference type="eggNOG" id="KOG1997">
    <property type="taxonomic scope" value="Eukaryota"/>
</dbReference>
<dbReference type="GeneTree" id="ENSGT00940000155876"/>
<dbReference type="HOGENOM" id="CLU_000624_0_0_1"/>
<dbReference type="InParanoid" id="Q8NF50"/>
<dbReference type="OMA" id="MMERKIP"/>
<dbReference type="OrthoDB" id="47328at2759"/>
<dbReference type="PAN-GO" id="Q8NF50">
    <property type="GO annotations" value="5 GO annotations based on evolutionary models"/>
</dbReference>
<dbReference type="PhylomeDB" id="Q8NF50"/>
<dbReference type="TreeFam" id="TF313629"/>
<dbReference type="PathwayCommons" id="Q8NF50"/>
<dbReference type="Reactome" id="R-HSA-9013148">
    <property type="pathway name" value="CDC42 GTPase cycle"/>
</dbReference>
<dbReference type="Reactome" id="R-HSA-9013149">
    <property type="pathway name" value="RAC1 GTPase cycle"/>
</dbReference>
<dbReference type="Reactome" id="R-HSA-9013409">
    <property type="pathway name" value="RHOJ GTPase cycle"/>
</dbReference>
<dbReference type="Reactome" id="R-HSA-983231">
    <property type="pathway name" value="Factors involved in megakaryocyte development and platelet production"/>
</dbReference>
<dbReference type="SignaLink" id="Q8NF50"/>
<dbReference type="SIGNOR" id="Q8NF50"/>
<dbReference type="BioGRID-ORCS" id="81704">
    <property type="hits" value="9 hits in 1153 CRISPR screens"/>
</dbReference>
<dbReference type="ChiTaRS" id="DOCK8">
    <property type="organism name" value="human"/>
</dbReference>
<dbReference type="GeneWiki" id="Dock8"/>
<dbReference type="GenomeRNAi" id="81704"/>
<dbReference type="Pharos" id="Q8NF50">
    <property type="development level" value="Tbio"/>
</dbReference>
<dbReference type="PRO" id="PR:Q8NF50"/>
<dbReference type="Proteomes" id="UP000005640">
    <property type="component" value="Chromosome 9"/>
</dbReference>
<dbReference type="RNAct" id="Q8NF50">
    <property type="molecule type" value="protein"/>
</dbReference>
<dbReference type="Bgee" id="ENSG00000107099">
    <property type="expression patterns" value="Expressed in bone marrow cell and 168 other cell types or tissues"/>
</dbReference>
<dbReference type="ExpressionAtlas" id="Q8NF50">
    <property type="expression patterns" value="baseline and differential"/>
</dbReference>
<dbReference type="GO" id="GO:0031252">
    <property type="term" value="C:cell leading edge"/>
    <property type="evidence" value="ECO:0000318"/>
    <property type="project" value="GO_Central"/>
</dbReference>
<dbReference type="GO" id="GO:0005737">
    <property type="term" value="C:cytoplasm"/>
    <property type="evidence" value="ECO:0000314"/>
    <property type="project" value="UniProtKB"/>
</dbReference>
<dbReference type="GO" id="GO:0005829">
    <property type="term" value="C:cytosol"/>
    <property type="evidence" value="ECO:0000314"/>
    <property type="project" value="HPA"/>
</dbReference>
<dbReference type="GO" id="GO:0031258">
    <property type="term" value="C:lamellipodium membrane"/>
    <property type="evidence" value="ECO:0007669"/>
    <property type="project" value="UniProtKB-SubCell"/>
</dbReference>
<dbReference type="GO" id="GO:0031256">
    <property type="term" value="C:leading edge membrane"/>
    <property type="evidence" value="ECO:0000314"/>
    <property type="project" value="UniProtKB"/>
</dbReference>
<dbReference type="GO" id="GO:0016020">
    <property type="term" value="C:membrane"/>
    <property type="evidence" value="ECO:0007005"/>
    <property type="project" value="UniProtKB"/>
</dbReference>
<dbReference type="GO" id="GO:0005886">
    <property type="term" value="C:plasma membrane"/>
    <property type="evidence" value="ECO:0000314"/>
    <property type="project" value="HPA"/>
</dbReference>
<dbReference type="GO" id="GO:0005085">
    <property type="term" value="F:guanyl-nucleotide exchange factor activity"/>
    <property type="evidence" value="ECO:0000314"/>
    <property type="project" value="UniProtKB"/>
</dbReference>
<dbReference type="GO" id="GO:1990869">
    <property type="term" value="P:cellular response to chemokine"/>
    <property type="evidence" value="ECO:0000315"/>
    <property type="project" value="UniProtKB"/>
</dbReference>
<dbReference type="GO" id="GO:0036336">
    <property type="term" value="P:dendritic cell migration"/>
    <property type="evidence" value="ECO:0007669"/>
    <property type="project" value="Ensembl"/>
</dbReference>
<dbReference type="GO" id="GO:0001771">
    <property type="term" value="P:immunological synapse formation"/>
    <property type="evidence" value="ECO:0007669"/>
    <property type="project" value="Ensembl"/>
</dbReference>
<dbReference type="GO" id="GO:0061485">
    <property type="term" value="P:memory T cell proliferation"/>
    <property type="evidence" value="ECO:0000315"/>
    <property type="project" value="MGI"/>
</dbReference>
<dbReference type="GO" id="GO:0070233">
    <property type="term" value="P:negative regulation of T cell apoptotic process"/>
    <property type="evidence" value="ECO:0007669"/>
    <property type="project" value="Ensembl"/>
</dbReference>
<dbReference type="GO" id="GO:1903905">
    <property type="term" value="P:positive regulation of establishment of T cell polarity"/>
    <property type="evidence" value="ECO:0000315"/>
    <property type="project" value="UniProtKB"/>
</dbReference>
<dbReference type="GO" id="GO:0043547">
    <property type="term" value="P:positive regulation of GTPase activity"/>
    <property type="evidence" value="ECO:0000314"/>
    <property type="project" value="UniProtKB"/>
</dbReference>
<dbReference type="GO" id="GO:2000406">
    <property type="term" value="P:positive regulation of T cell migration"/>
    <property type="evidence" value="ECO:0000315"/>
    <property type="project" value="UniProtKB"/>
</dbReference>
<dbReference type="GO" id="GO:0035023">
    <property type="term" value="P:regulation of Rho protein signal transduction"/>
    <property type="evidence" value="ECO:0000318"/>
    <property type="project" value="GO_Central"/>
</dbReference>
<dbReference type="GO" id="GO:0051056">
    <property type="term" value="P:regulation of small GTPase mediated signal transduction"/>
    <property type="evidence" value="ECO:0000304"/>
    <property type="project" value="Reactome"/>
</dbReference>
<dbReference type="GO" id="GO:0007264">
    <property type="term" value="P:small GTPase-mediated signal transduction"/>
    <property type="evidence" value="ECO:0007669"/>
    <property type="project" value="InterPro"/>
</dbReference>
<dbReference type="CDD" id="cd08696">
    <property type="entry name" value="C2_Dock-C"/>
    <property type="match status" value="1"/>
</dbReference>
<dbReference type="CDD" id="cd11701">
    <property type="entry name" value="DHR2_DOCK8"/>
    <property type="match status" value="1"/>
</dbReference>
<dbReference type="FunFam" id="1.20.58.740:FF:000002">
    <property type="entry name" value="Dedicator of cytokinesis protein 7"/>
    <property type="match status" value="1"/>
</dbReference>
<dbReference type="FunFam" id="1.25.40.410:FF:000002">
    <property type="entry name" value="Dedicator of cytokinesis protein 7"/>
    <property type="match status" value="1"/>
</dbReference>
<dbReference type="FunFam" id="2.60.40.150:FF:000022">
    <property type="entry name" value="Dedicator of cytokinesis protein 7"/>
    <property type="match status" value="1"/>
</dbReference>
<dbReference type="Gene3D" id="1.20.58.740">
    <property type="match status" value="1"/>
</dbReference>
<dbReference type="Gene3D" id="1.25.40.410">
    <property type="match status" value="1"/>
</dbReference>
<dbReference type="Gene3D" id="2.60.40.150">
    <property type="entry name" value="C2 domain"/>
    <property type="match status" value="1"/>
</dbReference>
<dbReference type="InterPro" id="IPR016024">
    <property type="entry name" value="ARM-type_fold"/>
</dbReference>
<dbReference type="InterPro" id="IPR037808">
    <property type="entry name" value="C2_Dock-C"/>
</dbReference>
<dbReference type="InterPro" id="IPR027007">
    <property type="entry name" value="C2_DOCK-type_domain"/>
</dbReference>
<dbReference type="InterPro" id="IPR035892">
    <property type="entry name" value="C2_domain_sf"/>
</dbReference>
<dbReference type="InterPro" id="IPR026791">
    <property type="entry name" value="DOCK"/>
</dbReference>
<dbReference type="InterPro" id="IPR021816">
    <property type="entry name" value="DOCK_C/D_N"/>
</dbReference>
<dbReference type="InterPro" id="IPR043161">
    <property type="entry name" value="DOCK_C_lobe_A"/>
</dbReference>
<dbReference type="InterPro" id="IPR043162">
    <property type="entry name" value="DOCK_C_lobe_C"/>
</dbReference>
<dbReference type="InterPro" id="IPR027357">
    <property type="entry name" value="DOCKER_dom"/>
</dbReference>
<dbReference type="InterPro" id="IPR046769">
    <property type="entry name" value="DOCKER_Lobe_A"/>
</dbReference>
<dbReference type="InterPro" id="IPR046770">
    <property type="entry name" value="DOCKER_Lobe_B"/>
</dbReference>
<dbReference type="InterPro" id="IPR046773">
    <property type="entry name" value="DOCKER_Lobe_C"/>
</dbReference>
<dbReference type="PANTHER" id="PTHR23317">
    <property type="entry name" value="DEDICATOR OF CYTOKINESIS DOCK"/>
    <property type="match status" value="1"/>
</dbReference>
<dbReference type="PANTHER" id="PTHR23317:SF74">
    <property type="entry name" value="DEDICATOR OF CYTOKINESIS PROTEIN 8"/>
    <property type="match status" value="1"/>
</dbReference>
<dbReference type="Pfam" id="PF06920">
    <property type="entry name" value="DHR-2_Lobe_A"/>
    <property type="match status" value="1"/>
</dbReference>
<dbReference type="Pfam" id="PF20422">
    <property type="entry name" value="DHR-2_Lobe_B"/>
    <property type="match status" value="1"/>
</dbReference>
<dbReference type="Pfam" id="PF20421">
    <property type="entry name" value="DHR-2_Lobe_C"/>
    <property type="match status" value="1"/>
</dbReference>
<dbReference type="Pfam" id="PF14429">
    <property type="entry name" value="DOCK-C2"/>
    <property type="match status" value="1"/>
</dbReference>
<dbReference type="Pfam" id="PF11878">
    <property type="entry name" value="DOCK_C-D_N"/>
    <property type="match status" value="1"/>
</dbReference>
<dbReference type="SUPFAM" id="SSF48371">
    <property type="entry name" value="ARM repeat"/>
    <property type="match status" value="1"/>
</dbReference>
<dbReference type="PROSITE" id="PS51650">
    <property type="entry name" value="C2_DOCK"/>
    <property type="match status" value="1"/>
</dbReference>
<dbReference type="PROSITE" id="PS51651">
    <property type="entry name" value="DOCKER"/>
    <property type="match status" value="1"/>
</dbReference>
<name>DOCK8_HUMAN</name>
<proteinExistence type="evidence at protein level"/>
<organism>
    <name type="scientific">Homo sapiens</name>
    <name type="common">Human</name>
    <dbReference type="NCBI Taxonomy" id="9606"/>
    <lineage>
        <taxon>Eukaryota</taxon>
        <taxon>Metazoa</taxon>
        <taxon>Chordata</taxon>
        <taxon>Craniata</taxon>
        <taxon>Vertebrata</taxon>
        <taxon>Euteleostomi</taxon>
        <taxon>Mammalia</taxon>
        <taxon>Eutheria</taxon>
        <taxon>Euarchontoglires</taxon>
        <taxon>Primates</taxon>
        <taxon>Haplorrhini</taxon>
        <taxon>Catarrhini</taxon>
        <taxon>Hominidae</taxon>
        <taxon>Homo</taxon>
    </lineage>
</organism>
<accession>Q8NF50</accession>
<accession>A2A350</accession>
<accession>A2BDF2</accession>
<accession>A4FU78</accession>
<accession>B7ZLP0</accession>
<accession>E9PH09</accession>
<accession>Q3MV16</accession>
<accession>Q5JPJ1</accession>
<accession>Q8TEP1</accession>
<accession>Q8WUY2</accession>
<accession>Q9BYJ5</accession>
<accession>Q9H1Q2</accession>
<accession>Q9H1Q3</accession>
<accession>Q9H308</accession>
<accession>Q9H7P2</accession>
<keyword id="KW-0025">Alternative splicing</keyword>
<keyword id="KW-1003">Cell membrane</keyword>
<keyword id="KW-0966">Cell projection</keyword>
<keyword id="KW-0160">Chromosomal rearrangement</keyword>
<keyword id="KW-0963">Cytoplasm</keyword>
<keyword id="KW-0225">Disease variant</keyword>
<keyword id="KW-0344">Guanine-nucleotide releasing factor</keyword>
<keyword id="KW-0991">Intellectual disability</keyword>
<keyword id="KW-0472">Membrane</keyword>
<keyword id="KW-0597">Phosphoprotein</keyword>
<keyword id="KW-1267">Proteomics identification</keyword>
<keyword id="KW-1185">Reference proteome</keyword>
<evidence type="ECO:0000250" key="1">
    <source>
        <dbReference type="UniProtKB" id="Q8C147"/>
    </source>
</evidence>
<evidence type="ECO:0000255" key="2">
    <source>
        <dbReference type="PROSITE-ProRule" id="PRU00983"/>
    </source>
</evidence>
<evidence type="ECO:0000255" key="3">
    <source>
        <dbReference type="PROSITE-ProRule" id="PRU00984"/>
    </source>
</evidence>
<evidence type="ECO:0000269" key="4">
    <source>
    </source>
</evidence>
<evidence type="ECO:0000269" key="5">
    <source>
    </source>
</evidence>
<evidence type="ECO:0000269" key="6">
    <source>
    </source>
</evidence>
<evidence type="ECO:0000269" key="7">
    <source>
    </source>
</evidence>
<evidence type="ECO:0000269" key="8">
    <source>
    </source>
</evidence>
<evidence type="ECO:0000269" key="9">
    <source>
    </source>
</evidence>
<evidence type="ECO:0000269" key="10">
    <source>
    </source>
</evidence>
<evidence type="ECO:0000269" key="11">
    <source>
    </source>
</evidence>
<evidence type="ECO:0000269" key="12">
    <source ref="1"/>
</evidence>
<evidence type="ECO:0000303" key="13">
    <source>
    </source>
</evidence>
<evidence type="ECO:0000305" key="14"/>
<evidence type="ECO:0000305" key="15">
    <source>
    </source>
</evidence>
<evidence type="ECO:0007744" key="16">
    <source>
    </source>
</evidence>
<evidence type="ECO:0007744" key="17">
    <source>
    </source>
</evidence>
<evidence type="ECO:0007744" key="18">
    <source>
    </source>
</evidence>
<feature type="chain" id="PRO_0000189997" description="Dedicator of cytokinesis protein 8">
    <location>
        <begin position="1"/>
        <end position="2099"/>
    </location>
</feature>
<feature type="domain" description="C2 DOCK-type" evidence="2">
    <location>
        <begin position="560"/>
        <end position="729"/>
    </location>
</feature>
<feature type="domain" description="DOCKER" evidence="3">
    <location>
        <begin position="1632"/>
        <end position="2066"/>
    </location>
</feature>
<feature type="modified residue" description="Phosphoserine" evidence="18">
    <location>
        <position position="20"/>
    </location>
</feature>
<feature type="modified residue" description="Phosphoserine" evidence="18">
    <location>
        <position position="139"/>
    </location>
</feature>
<feature type="modified residue" description="Phosphoserine" evidence="16 17 18">
    <location>
        <position position="451"/>
    </location>
</feature>
<feature type="modified residue" description="Phosphoserine" evidence="1">
    <location>
        <position position="904"/>
    </location>
</feature>
<feature type="modified residue" description="Phosphoserine" evidence="18">
    <location>
        <position position="936"/>
    </location>
</feature>
<feature type="modified residue" description="Phosphoserine" evidence="18">
    <location>
        <position position="1145"/>
    </location>
</feature>
<feature type="modified residue" description="Phosphoserine" evidence="1">
    <location>
        <position position="1243"/>
    </location>
</feature>
<feature type="modified residue" description="Phosphoserine" evidence="18">
    <location>
        <position position="2087"/>
    </location>
</feature>
<feature type="splice variant" id="VSP_039838" description="In isoform 3 and isoform 4." evidence="13">
    <location>
        <begin position="1"/>
        <end position="68"/>
    </location>
</feature>
<feature type="splice variant" id="VSP_027373" description="In isoform 2 and isoform 4." evidence="13">
    <location>
        <begin position="927"/>
        <end position="958"/>
    </location>
</feature>
<feature type="sequence variant" id="VAR_033888" description="In dbSNP:rs529208." evidence="12">
    <original>P</original>
    <variation>T</variation>
    <location>
        <position position="97"/>
    </location>
</feature>
<feature type="sequence variant" id="VAR_059972" description="In dbSNP:rs11789099.">
    <original>E</original>
    <variation>K</variation>
    <location>
        <position position="169"/>
    </location>
</feature>
<feature type="sequence variant" id="VAR_033889" description="In dbSNP:rs11789099.">
    <original>E</original>
    <variation>K</variation>
    <location>
        <position position="237"/>
    </location>
</feature>
<feature type="sequence variant" id="VAR_033890" description="In dbSNP:rs10970979." evidence="5">
    <original>N</original>
    <variation>S</variation>
    <location>
        <position position="413"/>
    </location>
</feature>
<feature type="sequence variant" id="VAR_063753" description="In HIES2; dbSNP:rs112321280." evidence="7">
    <original>K</original>
    <variation>R</variation>
    <location>
        <position position="473"/>
    </location>
</feature>
<feature type="sequence variant" id="VAR_033891" description="In dbSNP:rs17673268.">
    <original>A</original>
    <variation>V</variation>
    <location>
        <position position="597"/>
    </location>
</feature>
<feature type="sequence variant" id="VAR_071964" description="In dbSNP:rs1381340726." evidence="9">
    <original>I</original>
    <variation>V</variation>
    <location>
        <position position="652"/>
    </location>
</feature>
<feature type="sequence variant" id="VAR_033892" description="In dbSNP:rs16937932.">
    <original>R</original>
    <variation>W</variation>
    <location>
        <position position="1008"/>
    </location>
</feature>
<feature type="sequence variant" id="VAR_033893" description="In dbSNP:rs34908836." evidence="4">
    <original>A</original>
    <variation>P</variation>
    <location>
        <position position="1970"/>
    </location>
</feature>
<feature type="mutagenesis site" description="Abolishes phosphorylation. No migration in response to chemokine CXCL12/SDF-1-alpha stimulation; when associated with A-2082 and A-2087." evidence="11">
    <original>S</original>
    <variation>A</variation>
    <location>
        <position position="2077"/>
    </location>
</feature>
<feature type="mutagenesis site" description="Phosphomimetic mutant. Enhances migration in response to chemokine CXCL12/SDF-1-alpha stimulation and reduces interaction with LRCH1; when associated with E-2082 and E-2087." evidence="11">
    <original>S</original>
    <variation>E</variation>
    <location>
        <position position="2077"/>
    </location>
</feature>
<feature type="mutagenesis site" description="Abolishes phosphorylation. No migration in response to chemokine CXCL12/SDF-1-alpha stimulation; when associated with A-2077 and A-2087." evidence="11">
    <original>S</original>
    <variation>A</variation>
    <location>
        <position position="2082"/>
    </location>
</feature>
<feature type="mutagenesis site" description="Phosphomimetic mutant. Enhances migration in response to chemokine CXCL12/SDF-1-alpha stimulation and reduces interaction with LRCH1; when associated with E-2077 and E-2087." evidence="11">
    <original>S</original>
    <variation>E</variation>
    <location>
        <position position="2082"/>
    </location>
</feature>
<feature type="mutagenesis site" description="Abolishes phosphorylation. No migration in response to chemokine CXCL12/SDF-1-alpha stimulation; when associated with A-2077 and A-2082." evidence="11">
    <original>S</original>
    <variation>A</variation>
    <location>
        <position position="2087"/>
    </location>
</feature>
<feature type="mutagenesis site" description="Phosphomimetic mutant. Enhances migration in response to chemokine CXCL12/SDF-1-alpha stimulation and reduces interaction with LRCH1; when associated with E-2077 and E-2082." evidence="11">
    <original>S</original>
    <variation>E</variation>
    <location>
        <position position="2087"/>
    </location>
</feature>
<feature type="sequence conflict" description="In Ref. 1; BAE45254." evidence="14" ref="1">
    <original>A</original>
    <variation>V</variation>
    <location>
        <position position="22"/>
    </location>
</feature>
<feature type="sequence conflict" description="In Ref. 3; AAI30519/AAI43930." evidence="14" ref="3">
    <original>S</original>
    <variation>I</variation>
    <location>
        <position position="470"/>
    </location>
</feature>
<feature type="sequence conflict" description="In Ref. 4; CAI46160." evidence="14" ref="4">
    <original>V</original>
    <variation>VV</variation>
    <location>
        <position position="600"/>
    </location>
</feature>
<feature type="sequence conflict" description="In Ref. 6; BAB84907." evidence="14" ref="6">
    <original>V</original>
    <variation>F</variation>
    <location>
        <position position="1751"/>
    </location>
</feature>
<feature type="sequence conflict" description="In Ref. 6; BAB84907." evidence="14" ref="6">
    <original>V</original>
    <variation>F</variation>
    <location>
        <position position="1755"/>
    </location>
</feature>
<feature type="sequence conflict" description="In Ref. 3; AAI30519/AAI43930." evidence="14" ref="3">
    <original>Y</original>
    <variation>F</variation>
    <location>
        <position position="1927"/>
    </location>
</feature>
<feature type="sequence conflict" description="In Ref. 8; AAG42221." evidence="14" ref="8">
    <original>E</original>
    <variation>K</variation>
    <location>
        <position position="2029"/>
    </location>
</feature>
<feature type="sequence conflict" description="In Ref. 8; AAG42221." evidence="14" ref="8">
    <original>L</original>
    <variation>F</variation>
    <location>
        <position position="2046"/>
    </location>
</feature>
<protein>
    <recommendedName>
        <fullName>Dedicator of cytokinesis protein 8</fullName>
    </recommendedName>
</protein>
<sequence length="2099" mass="238529">MATLPSAERRAFALKINRYSSAEIRKQFTLPPNLGQYHRQSISTSGFPSLQLPQFYDPVEPVDFEGLLMTHLNSLDVQLAQELGDFTDDDLDVVFTPKECRTLQPSLPEEGVELDPHVRDCVQTYIREWLIVNRKNQGSPEICGFKKTGSRKDFHKTLPKQTFESETLECSEPAAQAGPRHLNVLCDVSGKGPVTACDFDLRSLQPDKRLENLLQQVSAEDFEKQNEEARRTNRQAELFALYPSVDEEDAVEIRPVPECPKEHLGNRILVKLLTLKFEIEIEPLFASIALYDVKERKKISENFHCDLNSDQFKGFLRAHTPSVAASSQARSAVFSVTYPSSDIYLVVKIEKVLQQGEIGDCAEPYTVIKESDGGKSKEKIEKLKLQAESFCQRLGKYRMPFAWAPISLSSFFNVSTLEREVTDVDSVVGRSSVGERRTLAQSRRLSERALSLEENGVGSNFKTSTLSVSSFFKQEGDRLSDEDLFKFLADYKRSSSLQRRVKSIPGLLRLEISTAPEIINCCLTPEMLPVKPFPENRTRPHKEILEFPTREVYVPHTVYRNLLYVYPQRLNFVNKLASARNITIKIQFMCGEDASNAMPVIFGKSSGPEFLQEVYTAVTYHNKSPDFYEEVKIKLPAKLTVNHHLLFTFYHISCQQKQGASVETLLGYSWLPILLNERLQTGSYCLPVALEKLPPNYSMHSAEKVPLQNPPIKWAEGHKGVFNIEVQAVSSVHTQDNHLEKFFTLCHSLESQVTFPIRVLDQKISEMALEHELKLSIICLNSSRLEPLVLFLHLVLDKLFQLSVQPMVIAGQTANFSQFAFESVVAIANSLHNSKDLSKDQHGRNCLLASYVHYVFRLPEVQRDVPKSGAPTALLDPRSYHTYGRTSAAAVSSKLLQARVMSSSNPDLAGTHSAADEEVKNIMSSKIADRNCSRMSYYCSGSSDAPSSPAAPRPASKKHFHEELALQMVVSTGMVRETVFKYAWFFFELLVKSMAQHVHNMDKRDSFRRTRFSDRFMDDITTIVNVVTSEIAALLVKPQKENEQAEKMNISLAFFLYDLLSLMDRGFVFNLIRHYCSQLSAKLSNLPTLISMRLEFLRILCSHEHYLNLNLFFMNADTAPTSPCPSISSQNSSSCSSFQDQKIASMFDLTSEYRQQHFLTGLLFTELAAALDAEGEGISKVQRKAVSAIHSLLSSHDLDPRCVKPEVKVKIAALYLPLVGIILDALPQLCDFTVADTRRYRTSGSDEEQEGAGAINQNVALAIAGNNFNLKTSGIVLSSLPYKQYNMLNADTTRNLMICFLWIMKNADQSLIRKWIADLPSTQLNRILDLLFICVLCFEYKGKQSSDKVSTQVLQKSRDVKARLEEALLRGEGARGEMMRRRAPGNDRFPGLNENLRWKKEQTHWRQANEKLDKTKAELDQEALISGNLATEAHLIILDMQENIIQASSALDCKDSLLGGVLRVLVNSLNCDQSTTYLTHCFATLRALIAKFGDLLFEEEVEQCFDLCHQVLHHCSSSMDVTRSQACATLYLLMRFSFGATSNFARVKMQVTMSLASLVGRAPDFNEEHLRRSLRTILAYSEEDTAMQMTPFPTQVEELLCNLNSILYDTVKMREFQEDPEMLMDLMYRIAKSYQASPDLRLTWLQNMAEKHTKKKCYTEAAMCLVHAAALVAEYLSMLEDHSYLPVGSVSFQNISSNVLEESVVSEDTLSPDEDGVCAGQYFTESGLVGLLEQAAELFSTGGLYETVNEVYKLVIPILEAHREFRKLTLTHSKLQRAFDSIVNKDHKRMFGTYFRVGFFGSKFGDLDEQEFVYKEPAITKLPEISHRLEAFYGQCFGAEFVEVIKDSTPVDKTKLDPNKAYIQITFVEPYFDEYEMKDRVTYFEKNFNLRRFMYTTPFTLEGRPRGELHEQYRRNTVLTTMHAFPYIKTRISVIQKEEFVLTPIEVAIEDMKKKTLQLAVAINQEPPDAKMLQMVLQGSVGATVNQGPLEVAQVFLAEIPADPKLYRHHNKLRLCFKEFIMRCGEAVEKNKRLITADQREYQQELKKNYNKLKENLRPMIERKIPELYKPIFRVESQKRDSFHRSSFRKCETQLSQGS</sequence>
<reference key="1">
    <citation type="submission" date="2004-09" db="EMBL/GenBank/DDBJ databases">
        <title>DOCK8, a candidate tumor suppressor gene.</title>
        <authorList>
            <person name="Takahashi K."/>
            <person name="Kohno T."/>
            <person name="Yokota J."/>
        </authorList>
    </citation>
    <scope>NUCLEOTIDE SEQUENCE [MRNA] (ISOFORM 1)</scope>
    <scope>VARIANT THR-97</scope>
    <source>
        <tissue>Lung</tissue>
    </source>
</reference>
<reference key="2">
    <citation type="journal article" date="2004" name="Nature">
        <title>DNA sequence and analysis of human chromosome 9.</title>
        <authorList>
            <person name="Humphray S.J."/>
            <person name="Oliver K."/>
            <person name="Hunt A.R."/>
            <person name="Plumb R.W."/>
            <person name="Loveland J.E."/>
            <person name="Howe K.L."/>
            <person name="Andrews T.D."/>
            <person name="Searle S."/>
            <person name="Hunt S.E."/>
            <person name="Scott C.E."/>
            <person name="Jones M.C."/>
            <person name="Ainscough R."/>
            <person name="Almeida J.P."/>
            <person name="Ambrose K.D."/>
            <person name="Ashwell R.I.S."/>
            <person name="Babbage A.K."/>
            <person name="Babbage S."/>
            <person name="Bagguley C.L."/>
            <person name="Bailey J."/>
            <person name="Banerjee R."/>
            <person name="Barker D.J."/>
            <person name="Barlow K.F."/>
            <person name="Bates K."/>
            <person name="Beasley H."/>
            <person name="Beasley O."/>
            <person name="Bird C.P."/>
            <person name="Bray-Allen S."/>
            <person name="Brown A.J."/>
            <person name="Brown J.Y."/>
            <person name="Burford D."/>
            <person name="Burrill W."/>
            <person name="Burton J."/>
            <person name="Carder C."/>
            <person name="Carter N.P."/>
            <person name="Chapman J.C."/>
            <person name="Chen Y."/>
            <person name="Clarke G."/>
            <person name="Clark S.Y."/>
            <person name="Clee C.M."/>
            <person name="Clegg S."/>
            <person name="Collier R.E."/>
            <person name="Corby N."/>
            <person name="Crosier M."/>
            <person name="Cummings A.T."/>
            <person name="Davies J."/>
            <person name="Dhami P."/>
            <person name="Dunn M."/>
            <person name="Dutta I."/>
            <person name="Dyer L.W."/>
            <person name="Earthrowl M.E."/>
            <person name="Faulkner L."/>
            <person name="Fleming C.J."/>
            <person name="Frankish A."/>
            <person name="Frankland J.A."/>
            <person name="French L."/>
            <person name="Fricker D.G."/>
            <person name="Garner P."/>
            <person name="Garnett J."/>
            <person name="Ghori J."/>
            <person name="Gilbert J.G.R."/>
            <person name="Glison C."/>
            <person name="Grafham D.V."/>
            <person name="Gribble S."/>
            <person name="Griffiths C."/>
            <person name="Griffiths-Jones S."/>
            <person name="Grocock R."/>
            <person name="Guy J."/>
            <person name="Hall R.E."/>
            <person name="Hammond S."/>
            <person name="Harley J.L."/>
            <person name="Harrison E.S.I."/>
            <person name="Hart E.A."/>
            <person name="Heath P.D."/>
            <person name="Henderson C.D."/>
            <person name="Hopkins B.L."/>
            <person name="Howard P.J."/>
            <person name="Howden P.J."/>
            <person name="Huckle E."/>
            <person name="Johnson C."/>
            <person name="Johnson D."/>
            <person name="Joy A.A."/>
            <person name="Kay M."/>
            <person name="Keenan S."/>
            <person name="Kershaw J.K."/>
            <person name="Kimberley A.M."/>
            <person name="King A."/>
            <person name="Knights A."/>
            <person name="Laird G.K."/>
            <person name="Langford C."/>
            <person name="Lawlor S."/>
            <person name="Leongamornlert D.A."/>
            <person name="Leversha M."/>
            <person name="Lloyd C."/>
            <person name="Lloyd D.M."/>
            <person name="Lovell J."/>
            <person name="Martin S."/>
            <person name="Mashreghi-Mohammadi M."/>
            <person name="Matthews L."/>
            <person name="McLaren S."/>
            <person name="McLay K.E."/>
            <person name="McMurray A."/>
            <person name="Milne S."/>
            <person name="Nickerson T."/>
            <person name="Nisbett J."/>
            <person name="Nordsiek G."/>
            <person name="Pearce A.V."/>
            <person name="Peck A.I."/>
            <person name="Porter K.M."/>
            <person name="Pandian R."/>
            <person name="Pelan S."/>
            <person name="Phillimore B."/>
            <person name="Povey S."/>
            <person name="Ramsey Y."/>
            <person name="Rand V."/>
            <person name="Scharfe M."/>
            <person name="Sehra H.K."/>
            <person name="Shownkeen R."/>
            <person name="Sims S.K."/>
            <person name="Skuce C.D."/>
            <person name="Smith M."/>
            <person name="Steward C.A."/>
            <person name="Swarbreck D."/>
            <person name="Sycamore N."/>
            <person name="Tester J."/>
            <person name="Thorpe A."/>
            <person name="Tracey A."/>
            <person name="Tromans A."/>
            <person name="Thomas D.W."/>
            <person name="Wall M."/>
            <person name="Wallis J.M."/>
            <person name="West A.P."/>
            <person name="Whitehead S.L."/>
            <person name="Willey D.L."/>
            <person name="Williams S.A."/>
            <person name="Wilming L."/>
            <person name="Wray P.W."/>
            <person name="Young L."/>
            <person name="Ashurst J.L."/>
            <person name="Coulson A."/>
            <person name="Blocker H."/>
            <person name="Durbin R.M."/>
            <person name="Sulston J.E."/>
            <person name="Hubbard T."/>
            <person name="Jackson M.J."/>
            <person name="Bentley D.R."/>
            <person name="Beck S."/>
            <person name="Rogers J."/>
            <person name="Dunham I."/>
        </authorList>
    </citation>
    <scope>NUCLEOTIDE SEQUENCE [LARGE SCALE GENOMIC DNA]</scope>
</reference>
<reference key="3">
    <citation type="journal article" date="2004" name="Genome Res.">
        <title>The status, quality, and expansion of the NIH full-length cDNA project: the Mammalian Gene Collection (MGC).</title>
        <authorList>
            <consortium name="The MGC Project Team"/>
        </authorList>
    </citation>
    <scope>NUCLEOTIDE SEQUENCE [LARGE SCALE MRNA] (ISOFORMS 3 AND 4)</scope>
    <scope>NUCLEOTIDE SEQUENCE [LARGE SCALE MRNA] OF 53-2099 (ISOFORM 2)</scope>
    <scope>VARIANT SER-413</scope>
    <source>
        <tissue>Brain</tissue>
        <tissue>Muscle</tissue>
        <tissue>Testis</tissue>
    </source>
</reference>
<reference key="4">
    <citation type="journal article" date="2007" name="BMC Genomics">
        <title>The full-ORF clone resource of the German cDNA consortium.</title>
        <authorList>
            <person name="Bechtel S."/>
            <person name="Rosenfelder H."/>
            <person name="Duda A."/>
            <person name="Schmidt C.P."/>
            <person name="Ernst U."/>
            <person name="Wellenreuther R."/>
            <person name="Mehrle A."/>
            <person name="Schuster C."/>
            <person name="Bahr A."/>
            <person name="Bloecker H."/>
            <person name="Heubner D."/>
            <person name="Hoerlein A."/>
            <person name="Michel G."/>
            <person name="Wedler H."/>
            <person name="Koehrer K."/>
            <person name="Ottenwaelder B."/>
            <person name="Poustka A."/>
            <person name="Wiemann S."/>
            <person name="Schupp I."/>
        </authorList>
    </citation>
    <scope>NUCLEOTIDE SEQUENCE [LARGE SCALE MRNA] OF 53-2099 (ISOFORM 1)</scope>
    <source>
        <tissue>Lymph node</tissue>
    </source>
</reference>
<reference key="5">
    <citation type="journal article" date="2003" name="DNA Res.">
        <title>Characterization of long cDNA clones from human adult spleen. II. The complete sequences of 81 cDNA clones.</title>
        <authorList>
            <person name="Jikuya H."/>
            <person name="Takano J."/>
            <person name="Kikuno R."/>
            <person name="Hirosawa M."/>
            <person name="Nagase T."/>
            <person name="Nomura N."/>
            <person name="Ohara O."/>
        </authorList>
    </citation>
    <scope>NUCLEOTIDE SEQUENCE [LARGE SCALE MRNA] OF 301-2099 (ISOFORM 1)</scope>
    <source>
        <tissue>Spleen</tissue>
    </source>
</reference>
<reference key="6">
    <citation type="submission" date="2002-02" db="EMBL/GenBank/DDBJ databases">
        <title>The nucleotide sequence of a long cDNA clone isolated from human spleen.</title>
        <authorList>
            <person name="Jikuya H."/>
            <person name="Takano J."/>
            <person name="Nomura N."/>
            <person name="Kikuno R."/>
            <person name="Nagase T."/>
            <person name="Ohara O."/>
        </authorList>
    </citation>
    <scope>NUCLEOTIDE SEQUENCE [LARGE SCALE MRNA] OF 591-2099 (ISOFORM 1)</scope>
    <source>
        <tissue>Spleen</tissue>
    </source>
</reference>
<reference key="7">
    <citation type="journal article" date="2004" name="Nat. Genet.">
        <title>Complete sequencing and characterization of 21,243 full-length human cDNAs.</title>
        <authorList>
            <person name="Ota T."/>
            <person name="Suzuki Y."/>
            <person name="Nishikawa T."/>
            <person name="Otsuki T."/>
            <person name="Sugiyama T."/>
            <person name="Irie R."/>
            <person name="Wakamatsu A."/>
            <person name="Hayashi K."/>
            <person name="Sato H."/>
            <person name="Nagai K."/>
            <person name="Kimura K."/>
            <person name="Makita H."/>
            <person name="Sekine M."/>
            <person name="Obayashi M."/>
            <person name="Nishi T."/>
            <person name="Shibahara T."/>
            <person name="Tanaka T."/>
            <person name="Ishii S."/>
            <person name="Yamamoto J."/>
            <person name="Saito K."/>
            <person name="Kawai Y."/>
            <person name="Isono Y."/>
            <person name="Nakamura Y."/>
            <person name="Nagahari K."/>
            <person name="Murakami K."/>
            <person name="Yasuda T."/>
            <person name="Iwayanagi T."/>
            <person name="Wagatsuma M."/>
            <person name="Shiratori A."/>
            <person name="Sudo H."/>
            <person name="Hosoiri T."/>
            <person name="Kaku Y."/>
            <person name="Kodaira H."/>
            <person name="Kondo H."/>
            <person name="Sugawara M."/>
            <person name="Takahashi M."/>
            <person name="Kanda K."/>
            <person name="Yokoi T."/>
            <person name="Furuya T."/>
            <person name="Kikkawa E."/>
            <person name="Omura Y."/>
            <person name="Abe K."/>
            <person name="Kamihara K."/>
            <person name="Katsuta N."/>
            <person name="Sato K."/>
            <person name="Tanikawa M."/>
            <person name="Yamazaki M."/>
            <person name="Ninomiya K."/>
            <person name="Ishibashi T."/>
            <person name="Yamashita H."/>
            <person name="Murakawa K."/>
            <person name="Fujimori K."/>
            <person name="Tanai H."/>
            <person name="Kimata M."/>
            <person name="Watanabe M."/>
            <person name="Hiraoka S."/>
            <person name="Chiba Y."/>
            <person name="Ishida S."/>
            <person name="Ono Y."/>
            <person name="Takiguchi S."/>
            <person name="Watanabe S."/>
            <person name="Yosida M."/>
            <person name="Hotuta T."/>
            <person name="Kusano J."/>
            <person name="Kanehori K."/>
            <person name="Takahashi-Fujii A."/>
            <person name="Hara H."/>
            <person name="Tanase T.-O."/>
            <person name="Nomura Y."/>
            <person name="Togiya S."/>
            <person name="Komai F."/>
            <person name="Hara R."/>
            <person name="Takeuchi K."/>
            <person name="Arita M."/>
            <person name="Imose N."/>
            <person name="Musashino K."/>
            <person name="Yuuki H."/>
            <person name="Oshima A."/>
            <person name="Sasaki N."/>
            <person name="Aotsuka S."/>
            <person name="Yoshikawa Y."/>
            <person name="Matsunawa H."/>
            <person name="Ichihara T."/>
            <person name="Shiohata N."/>
            <person name="Sano S."/>
            <person name="Moriya S."/>
            <person name="Momiyama H."/>
            <person name="Satoh N."/>
            <person name="Takami S."/>
            <person name="Terashima Y."/>
            <person name="Suzuki O."/>
            <person name="Nakagawa S."/>
            <person name="Senoh A."/>
            <person name="Mizoguchi H."/>
            <person name="Goto Y."/>
            <person name="Shimizu F."/>
            <person name="Wakebe H."/>
            <person name="Hishigaki H."/>
            <person name="Watanabe T."/>
            <person name="Sugiyama A."/>
            <person name="Takemoto M."/>
            <person name="Kawakami B."/>
            <person name="Yamazaki M."/>
            <person name="Watanabe K."/>
            <person name="Kumagai A."/>
            <person name="Itakura S."/>
            <person name="Fukuzumi Y."/>
            <person name="Fujimori Y."/>
            <person name="Komiyama M."/>
            <person name="Tashiro H."/>
            <person name="Tanigami A."/>
            <person name="Fujiwara T."/>
            <person name="Ono T."/>
            <person name="Yamada K."/>
            <person name="Fujii Y."/>
            <person name="Ozaki K."/>
            <person name="Hirao M."/>
            <person name="Ohmori Y."/>
            <person name="Kawabata A."/>
            <person name="Hikiji T."/>
            <person name="Kobatake N."/>
            <person name="Inagaki H."/>
            <person name="Ikema Y."/>
            <person name="Okamoto S."/>
            <person name="Okitani R."/>
            <person name="Kawakami T."/>
            <person name="Noguchi S."/>
            <person name="Itoh T."/>
            <person name="Shigeta K."/>
            <person name="Senba T."/>
            <person name="Matsumura K."/>
            <person name="Nakajima Y."/>
            <person name="Mizuno T."/>
            <person name="Morinaga M."/>
            <person name="Sasaki M."/>
            <person name="Togashi T."/>
            <person name="Oyama M."/>
            <person name="Hata H."/>
            <person name="Watanabe M."/>
            <person name="Komatsu T."/>
            <person name="Mizushima-Sugano J."/>
            <person name="Satoh T."/>
            <person name="Shirai Y."/>
            <person name="Takahashi Y."/>
            <person name="Nakagawa K."/>
            <person name="Okumura K."/>
            <person name="Nagase T."/>
            <person name="Nomura N."/>
            <person name="Kikuchi H."/>
            <person name="Masuho Y."/>
            <person name="Yamashita R."/>
            <person name="Nakai K."/>
            <person name="Yada T."/>
            <person name="Nakamura Y."/>
            <person name="Ohara O."/>
            <person name="Isogai T."/>
            <person name="Sugano S."/>
        </authorList>
    </citation>
    <scope>NUCLEOTIDE SEQUENCE [LARGE SCALE MRNA] OF 920-2099 (ISOFORM 1)</scope>
    <source>
        <tissue>Spleen</tissue>
    </source>
</reference>
<reference key="8">
    <citation type="journal article" date="2000" name="Genomics">
        <title>The region on 9p associated with 46,XY sex reversal contains several transcripts expressed in the urogenital system and a novel doublesex-related domain.</title>
        <authorList>
            <person name="Ottolenghi C."/>
            <person name="Veitia R."/>
            <person name="Quintana-Murci L."/>
            <person name="Torchard D."/>
            <person name="Scapoli L."/>
            <person name="Souleyreau-Therville N."/>
            <person name="Beckmann J."/>
            <person name="Fellous M."/>
            <person name="McElreavey K."/>
        </authorList>
    </citation>
    <scope>NUCLEOTIDE SEQUENCE [MRNA] OF 1775-2099</scope>
    <scope>VARIANT PRO-1970</scope>
</reference>
<reference key="9">
    <citation type="journal article" date="2002" name="J. Cell Sci.">
        <title>Identification of an evolutionarily conserved superfamily of DOCK180-related proteins with guanine nucleotide exchange activity.</title>
        <authorList>
            <person name="Cote J.-F."/>
            <person name="Vuori K."/>
        </authorList>
    </citation>
    <scope>NOMENCLATURE</scope>
</reference>
<reference key="10">
    <citation type="journal article" date="2008" name="Genomics">
        <title>Dedicator of cytokinesis 8 is disrupted in two patients with mental retardation and developmental disabilities.</title>
        <authorList>
            <person name="Griggs B.L."/>
            <person name="Ladd S."/>
            <person name="Saul R.A."/>
            <person name="DuPont B.R."/>
            <person name="Srivastava A.K."/>
        </authorList>
    </citation>
    <scope>CHROMOSOMAL TRANSLOCATION</scope>
    <scope>INVOLVEMENT IN MRD2</scope>
</reference>
<reference key="11">
    <citation type="journal article" date="2009" name="Mol. Cell. Proteomics">
        <title>Large-scale proteomics analysis of the human kinome.</title>
        <authorList>
            <person name="Oppermann F.S."/>
            <person name="Gnad F."/>
            <person name="Olsen J.V."/>
            <person name="Hornberger R."/>
            <person name="Greff Z."/>
            <person name="Keri G."/>
            <person name="Mann M."/>
            <person name="Daub H."/>
        </authorList>
    </citation>
    <scope>PHOSPHORYLATION [LARGE SCALE ANALYSIS] AT SER-451</scope>
    <scope>IDENTIFICATION BY MASS SPECTROMETRY [LARGE SCALE ANALYSIS]</scope>
</reference>
<reference key="12">
    <citation type="journal article" date="2010" name="Sci. Signal.">
        <title>Quantitative phosphoproteomics reveals widespread full phosphorylation site occupancy during mitosis.</title>
        <authorList>
            <person name="Olsen J.V."/>
            <person name="Vermeulen M."/>
            <person name="Santamaria A."/>
            <person name="Kumar C."/>
            <person name="Miller M.L."/>
            <person name="Jensen L.J."/>
            <person name="Gnad F."/>
            <person name="Cox J."/>
            <person name="Jensen T.S."/>
            <person name="Nigg E.A."/>
            <person name="Brunak S."/>
            <person name="Mann M."/>
        </authorList>
    </citation>
    <scope>PHOSPHORYLATION [LARGE SCALE ANALYSIS] AT SER-451</scope>
    <scope>IDENTIFICATION BY MASS SPECTROMETRY [LARGE SCALE ANALYSIS]</scope>
    <source>
        <tissue>Cervix carcinoma</tissue>
    </source>
</reference>
<reference key="13">
    <citation type="journal article" date="2011" name="BMC Syst. Biol.">
        <title>Initial characterization of the human central proteome.</title>
        <authorList>
            <person name="Burkard T.R."/>
            <person name="Planyavsky M."/>
            <person name="Kaupe I."/>
            <person name="Breitwieser F.P."/>
            <person name="Buerckstuemmer T."/>
            <person name="Bennett K.L."/>
            <person name="Superti-Furga G."/>
            <person name="Colinge J."/>
        </authorList>
    </citation>
    <scope>IDENTIFICATION BY MASS SPECTROMETRY [LARGE SCALE ANALYSIS]</scope>
</reference>
<reference key="14">
    <citation type="journal article" date="2012" name="Blood">
        <title>DOCK8 is a Cdc42 activator critical for interstitial dendritic cell migration during immune responses.</title>
        <authorList>
            <person name="Harada Y."/>
            <person name="Tanaka Y."/>
            <person name="Terasawa M."/>
            <person name="Pieczyk M."/>
            <person name="Habiro K."/>
            <person name="Katakai T."/>
            <person name="Hanawa-Suetsugu K."/>
            <person name="Kukimoto-Niino M."/>
            <person name="Nishizaki T."/>
            <person name="Shirouzu M."/>
            <person name="Duan X."/>
            <person name="Uruno T."/>
            <person name="Nishikimi A."/>
            <person name="Sanematsu F."/>
            <person name="Yokoyama S."/>
            <person name="Stein J.V."/>
            <person name="Kinashi T."/>
            <person name="Fukui Y."/>
        </authorList>
    </citation>
    <scope>FUNCTION</scope>
    <scope>INTERACTION WITH CDC42</scope>
    <scope>DOMAIN</scope>
</reference>
<reference key="15">
    <citation type="journal article" date="2013" name="J. Proteome Res.">
        <title>Toward a comprehensive characterization of a human cancer cell phosphoproteome.</title>
        <authorList>
            <person name="Zhou H."/>
            <person name="Di Palma S."/>
            <person name="Preisinger C."/>
            <person name="Peng M."/>
            <person name="Polat A.N."/>
            <person name="Heck A.J."/>
            <person name="Mohammed S."/>
        </authorList>
    </citation>
    <scope>PHOSPHORYLATION [LARGE SCALE ANALYSIS] AT SER-20; SER-139; SER-451; SER-936; SER-1145 AND SER-2087</scope>
    <scope>IDENTIFICATION BY MASS SPECTROMETRY [LARGE SCALE ANALYSIS]</scope>
    <source>
        <tissue>Erythroleukemia</tissue>
    </source>
</reference>
<reference key="16">
    <citation type="journal article" date="2015" name="J. Immunol.">
        <title>HkRP3 is a microtubule-binding protein regulating lytic granule clustering and NK cell killing.</title>
        <authorList>
            <person name="Ham H."/>
            <person name="Huynh W."/>
            <person name="Schoon R.A."/>
            <person name="Vale R.D."/>
            <person name="Billadeau D.D."/>
        </authorList>
    </citation>
    <scope>FUNCTION</scope>
    <scope>INTERACTION WITH CCDC88B</scope>
</reference>
<reference key="17">
    <citation type="journal article" date="2015" name="Proteomics">
        <title>N-terminome analysis of the human mitochondrial proteome.</title>
        <authorList>
            <person name="Vaca Jacome A.S."/>
            <person name="Rabilloud T."/>
            <person name="Schaeffer-Reiss C."/>
            <person name="Rompais M."/>
            <person name="Ayoub D."/>
            <person name="Lane L."/>
            <person name="Bairoch A."/>
            <person name="Van Dorsselaer A."/>
            <person name="Carapito C."/>
        </authorList>
    </citation>
    <scope>IDENTIFICATION BY MASS SPECTROMETRY [LARGE SCALE ANALYSIS]</scope>
</reference>
<reference key="18">
    <citation type="journal article" date="2017" name="J. Exp. Med.">
        <title>LRCH1 interferes with DOCK8-Cdc42-induced T cell migration and ameliorates experimental autoimmune encephalomyelitis.</title>
        <authorList>
            <person name="Xu X."/>
            <person name="Han L."/>
            <person name="Zhao G."/>
            <person name="Xue S."/>
            <person name="Gao Y."/>
            <person name="Xiao J."/>
            <person name="Zhang S."/>
            <person name="Chen P."/>
            <person name="Wu Z.Y."/>
            <person name="Ding J."/>
            <person name="Hu R."/>
            <person name="Wei B."/>
            <person name="Wang H."/>
        </authorList>
    </citation>
    <scope>FUNCTION</scope>
    <scope>INTERACTION WITH LRCH1 AND CDC42</scope>
    <scope>SUBCELLULAR LOCATION</scope>
    <scope>TISSUE SPECIFICITY</scope>
    <scope>DOMAIN</scope>
    <scope>PHOSPHORYLATION</scope>
    <scope>MUTAGENESIS OF SER-2077; SER-2082 AND SER-2087</scope>
</reference>
<reference key="19">
    <citation type="journal article" date="2009" name="N. Engl. J. Med.">
        <title>Combined immunodeficiency associated with DOCK8 mutations.</title>
        <authorList>
            <person name="Zhang Q."/>
            <person name="Davis J.C."/>
            <person name="Lamborn I.T."/>
            <person name="Freeman A.F."/>
            <person name="Jing H."/>
            <person name="Favreau A.J."/>
            <person name="Matthews H.F."/>
            <person name="Davis J."/>
            <person name="Turner M.L."/>
            <person name="Uzel G."/>
            <person name="Holland S.M."/>
            <person name="Su H.C."/>
        </authorList>
    </citation>
    <scope>VARIANT HIES2 ARG-473</scope>
</reference>
<reference key="20">
    <citation type="journal article" date="2014" name="Eur. J. Hum. Genet.">
        <title>20 ans apres: a second mutation in MAOA identified by targeted high-throughput sequencing in a family with altered behavior and cognition.</title>
        <authorList>
            <person name="Piton A."/>
            <person name="Poquet H."/>
            <person name="Redin C."/>
            <person name="Masurel A."/>
            <person name="Lauer J."/>
            <person name="Muller J."/>
            <person name="Thevenon J."/>
            <person name="Herenger Y."/>
            <person name="Chancenotte S."/>
            <person name="Bonnet M."/>
            <person name="Pinoit J.M."/>
            <person name="Huet F."/>
            <person name="Thauvin-Robinet C."/>
            <person name="Jaeger A.S."/>
            <person name="Le Gras S."/>
            <person name="Jost B."/>
            <person name="Gerard B."/>
            <person name="Peoc'h K."/>
            <person name="Launay J.M."/>
            <person name="Faivre L."/>
            <person name="Mandel J.L."/>
        </authorList>
    </citation>
    <scope>VARIANT VAL-652</scope>
</reference>
<gene>
    <name type="primary">DOCK8</name>
</gene>